<proteinExistence type="evidence at protein level"/>
<keyword id="KW-0002">3D-structure</keyword>
<keyword id="KW-0225">Disease variant</keyword>
<keyword id="KW-0274">FAD</keyword>
<keyword id="KW-0285">Flavoprotein</keyword>
<keyword id="KW-0350">Heme biosynthesis</keyword>
<keyword id="KW-0472">Membrane</keyword>
<keyword id="KW-0496">Mitochondrion</keyword>
<keyword id="KW-0999">Mitochondrion inner membrane</keyword>
<keyword id="KW-0560">Oxidoreductase</keyword>
<keyword id="KW-0627">Porphyrin biosynthesis</keyword>
<keyword id="KW-1267">Proteomics identification</keyword>
<keyword id="KW-1185">Reference proteome</keyword>
<protein>
    <recommendedName>
        <fullName>Protoporphyrinogen oxidase</fullName>
        <shortName>PPO</shortName>
        <ecNumber evidence="22 24">1.3.3.4</ecNumber>
    </recommendedName>
</protein>
<accession>P50336</accession>
<accession>D3DVG0</accession>
<accession>Q5VTW8</accession>
<evidence type="ECO:0000250" key="1">
    <source>
        <dbReference type="UniProtKB" id="P51175"/>
    </source>
</evidence>
<evidence type="ECO:0000269" key="2">
    <source>
    </source>
</evidence>
<evidence type="ECO:0000269" key="3">
    <source>
    </source>
</evidence>
<evidence type="ECO:0000269" key="4">
    <source>
    </source>
</evidence>
<evidence type="ECO:0000269" key="5">
    <source>
    </source>
</evidence>
<evidence type="ECO:0000269" key="6">
    <source>
    </source>
</evidence>
<evidence type="ECO:0000269" key="7">
    <source>
    </source>
</evidence>
<evidence type="ECO:0000269" key="8">
    <source>
    </source>
</evidence>
<evidence type="ECO:0000269" key="9">
    <source>
    </source>
</evidence>
<evidence type="ECO:0000269" key="10">
    <source>
    </source>
</evidence>
<evidence type="ECO:0000269" key="11">
    <source>
    </source>
</evidence>
<evidence type="ECO:0000269" key="12">
    <source>
    </source>
</evidence>
<evidence type="ECO:0000269" key="13">
    <source>
    </source>
</evidence>
<evidence type="ECO:0000269" key="14">
    <source>
    </source>
</evidence>
<evidence type="ECO:0000269" key="15">
    <source>
    </source>
</evidence>
<evidence type="ECO:0000269" key="16">
    <source>
    </source>
</evidence>
<evidence type="ECO:0000269" key="17">
    <source>
    </source>
</evidence>
<evidence type="ECO:0000269" key="18">
    <source>
    </source>
</evidence>
<evidence type="ECO:0000269" key="19">
    <source>
    </source>
</evidence>
<evidence type="ECO:0000269" key="20">
    <source>
    </source>
</evidence>
<evidence type="ECO:0000269" key="21">
    <source>
    </source>
</evidence>
<evidence type="ECO:0000269" key="22">
    <source>
    </source>
</evidence>
<evidence type="ECO:0000269" key="23">
    <source>
    </source>
</evidence>
<evidence type="ECO:0000269" key="24">
    <source>
    </source>
</evidence>
<evidence type="ECO:0000269" key="25">
    <source>
    </source>
</evidence>
<evidence type="ECO:0000269" key="26">
    <source>
    </source>
</evidence>
<evidence type="ECO:0000269" key="27">
    <source>
    </source>
</evidence>
<evidence type="ECO:0000269" key="28">
    <source>
    </source>
</evidence>
<evidence type="ECO:0000269" key="29">
    <source>
    </source>
</evidence>
<evidence type="ECO:0000269" key="30">
    <source>
    </source>
</evidence>
<evidence type="ECO:0000269" key="31">
    <source>
    </source>
</evidence>
<evidence type="ECO:0000269" key="32">
    <source>
    </source>
</evidence>
<evidence type="ECO:0000269" key="33">
    <source>
    </source>
</evidence>
<evidence type="ECO:0000269" key="34">
    <source>
    </source>
</evidence>
<evidence type="ECO:0000269" key="35">
    <source>
    </source>
</evidence>
<evidence type="ECO:0000305" key="36"/>
<evidence type="ECO:0007829" key="37">
    <source>
        <dbReference type="PDB" id="3NKS"/>
    </source>
</evidence>
<evidence type="ECO:0007829" key="38">
    <source>
        <dbReference type="PDB" id="4IVO"/>
    </source>
</evidence>
<dbReference type="EC" id="1.3.3.4" evidence="22 24"/>
<dbReference type="EMBL" id="D38537">
    <property type="protein sequence ID" value="BAA07538.1"/>
    <property type="molecule type" value="mRNA"/>
</dbReference>
<dbReference type="EMBL" id="U26446">
    <property type="protein sequence ID" value="AAA67690.1"/>
    <property type="molecule type" value="mRNA"/>
</dbReference>
<dbReference type="EMBL" id="X99450">
    <property type="status" value="NOT_ANNOTATED_CDS"/>
    <property type="molecule type" value="Genomic_DNA"/>
</dbReference>
<dbReference type="EMBL" id="AL590714">
    <property type="status" value="NOT_ANNOTATED_CDS"/>
    <property type="molecule type" value="Genomic_DNA"/>
</dbReference>
<dbReference type="EMBL" id="CH471121">
    <property type="protein sequence ID" value="EAW52636.1"/>
    <property type="molecule type" value="Genomic_DNA"/>
</dbReference>
<dbReference type="EMBL" id="CH471121">
    <property type="protein sequence ID" value="EAW52639.1"/>
    <property type="molecule type" value="Genomic_DNA"/>
</dbReference>
<dbReference type="EMBL" id="CH471121">
    <property type="protein sequence ID" value="EAW52641.1"/>
    <property type="molecule type" value="Genomic_DNA"/>
</dbReference>
<dbReference type="EMBL" id="BC002357">
    <property type="protein sequence ID" value="AAH02357.1"/>
    <property type="molecule type" value="mRNA"/>
</dbReference>
<dbReference type="CCDS" id="CCDS1221.1"/>
<dbReference type="PIR" id="JC4971">
    <property type="entry name" value="A56449"/>
</dbReference>
<dbReference type="RefSeq" id="NP_000300.1">
    <property type="nucleotide sequence ID" value="NM_000309.5"/>
</dbReference>
<dbReference type="RefSeq" id="NP_001116236.1">
    <property type="nucleotide sequence ID" value="NM_001122764.3"/>
</dbReference>
<dbReference type="RefSeq" id="NP_001352327.1">
    <property type="nucleotide sequence ID" value="NM_001365398.1"/>
</dbReference>
<dbReference type="PDB" id="3NKS">
    <property type="method" value="X-ray"/>
    <property type="resolution" value="1.90 A"/>
    <property type="chains" value="A=1-477"/>
</dbReference>
<dbReference type="PDB" id="4IVM">
    <property type="method" value="X-ray"/>
    <property type="resolution" value="2.77 A"/>
    <property type="chains" value="B=1-477"/>
</dbReference>
<dbReference type="PDB" id="4IVO">
    <property type="method" value="X-ray"/>
    <property type="resolution" value="2.60 A"/>
    <property type="chains" value="B=1-477"/>
</dbReference>
<dbReference type="PDBsum" id="3NKS"/>
<dbReference type="PDBsum" id="4IVM"/>
<dbReference type="PDBsum" id="4IVO"/>
<dbReference type="SMR" id="P50336"/>
<dbReference type="BioGRID" id="111492">
    <property type="interactions" value="126"/>
</dbReference>
<dbReference type="FunCoup" id="P50336">
    <property type="interactions" value="1554"/>
</dbReference>
<dbReference type="IntAct" id="P50336">
    <property type="interactions" value="76"/>
</dbReference>
<dbReference type="MINT" id="P50336"/>
<dbReference type="STRING" id="9606.ENSP00000356978"/>
<dbReference type="BindingDB" id="P50336"/>
<dbReference type="ChEMBL" id="CHEMBL1926488"/>
<dbReference type="DrugBank" id="DB00855">
    <property type="generic name" value="Aminolevulinic acid"/>
</dbReference>
<dbReference type="iPTMnet" id="P50336"/>
<dbReference type="PhosphoSitePlus" id="P50336"/>
<dbReference type="SwissPalm" id="P50336"/>
<dbReference type="BioMuta" id="PPOX"/>
<dbReference type="DMDM" id="1709742"/>
<dbReference type="jPOST" id="P50336"/>
<dbReference type="MassIVE" id="P50336"/>
<dbReference type="PaxDb" id="9606-ENSP00000356978"/>
<dbReference type="PeptideAtlas" id="P50336"/>
<dbReference type="ProteomicsDB" id="56214"/>
<dbReference type="Pumba" id="P50336"/>
<dbReference type="Antibodypedia" id="34299">
    <property type="antibodies" value="278 antibodies from 29 providers"/>
</dbReference>
<dbReference type="DNASU" id="5498"/>
<dbReference type="Ensembl" id="ENST00000352210.9">
    <property type="protein sequence ID" value="ENSP00000343943.5"/>
    <property type="gene ID" value="ENSG00000143224.18"/>
</dbReference>
<dbReference type="Ensembl" id="ENST00000367999.9">
    <property type="protein sequence ID" value="ENSP00000356978.4"/>
    <property type="gene ID" value="ENSG00000143224.18"/>
</dbReference>
<dbReference type="GeneID" id="5498"/>
<dbReference type="KEGG" id="hsa:5498"/>
<dbReference type="MANE-Select" id="ENST00000367999.9">
    <property type="protein sequence ID" value="ENSP00000356978.4"/>
    <property type="RefSeq nucleotide sequence ID" value="NM_001122764.3"/>
    <property type="RefSeq protein sequence ID" value="NP_001116236.1"/>
</dbReference>
<dbReference type="UCSC" id="uc001fyg.3">
    <property type="organism name" value="human"/>
</dbReference>
<dbReference type="AGR" id="HGNC:9280"/>
<dbReference type="CTD" id="5498"/>
<dbReference type="DisGeNET" id="5498"/>
<dbReference type="GeneCards" id="PPOX"/>
<dbReference type="GeneReviews" id="PPOX"/>
<dbReference type="HGNC" id="HGNC:9280">
    <property type="gene designation" value="PPOX"/>
</dbReference>
<dbReference type="HPA" id="ENSG00000143224">
    <property type="expression patterns" value="Low tissue specificity"/>
</dbReference>
<dbReference type="MalaCards" id="PPOX"/>
<dbReference type="MIM" id="176200">
    <property type="type" value="phenotype"/>
</dbReference>
<dbReference type="MIM" id="600923">
    <property type="type" value="gene"/>
</dbReference>
<dbReference type="MIM" id="620483">
    <property type="type" value="phenotype"/>
</dbReference>
<dbReference type="neXtProt" id="NX_P50336"/>
<dbReference type="OpenTargets" id="ENSG00000143224"/>
<dbReference type="Orphanet" id="79473">
    <property type="disease" value="Variegate porphyria"/>
</dbReference>
<dbReference type="PharmGKB" id="PA33608"/>
<dbReference type="VEuPathDB" id="HostDB:ENSG00000143224"/>
<dbReference type="eggNOG" id="KOG1276">
    <property type="taxonomic scope" value="Eukaryota"/>
</dbReference>
<dbReference type="GeneTree" id="ENSGT00390000008744"/>
<dbReference type="HOGENOM" id="CLU_009629_2_1_1"/>
<dbReference type="InParanoid" id="P50336"/>
<dbReference type="OMA" id="WFDQWFG"/>
<dbReference type="OrthoDB" id="419752at2759"/>
<dbReference type="PAN-GO" id="P50336">
    <property type="GO annotations" value="3 GO annotations based on evolutionary models"/>
</dbReference>
<dbReference type="PhylomeDB" id="P50336"/>
<dbReference type="TreeFam" id="TF323479"/>
<dbReference type="BioCyc" id="MetaCyc:HS07011-MONOMER"/>
<dbReference type="BRENDA" id="1.3.3.4">
    <property type="organism ID" value="2681"/>
</dbReference>
<dbReference type="PathwayCommons" id="P50336"/>
<dbReference type="Reactome" id="R-HSA-189451">
    <property type="pathway name" value="Heme biosynthesis"/>
</dbReference>
<dbReference type="SABIO-RK" id="P50336"/>
<dbReference type="SignaLink" id="P50336"/>
<dbReference type="UniPathway" id="UPA00251">
    <property type="reaction ID" value="UER00324"/>
</dbReference>
<dbReference type="BioGRID-ORCS" id="5498">
    <property type="hits" value="32 hits in 1163 CRISPR screens"/>
</dbReference>
<dbReference type="EvolutionaryTrace" id="P50336"/>
<dbReference type="GeneWiki" id="PPOX"/>
<dbReference type="GenomeRNAi" id="5498"/>
<dbReference type="Pharos" id="P50336">
    <property type="development level" value="Tchem"/>
</dbReference>
<dbReference type="PRO" id="PR:P50336"/>
<dbReference type="Proteomes" id="UP000005640">
    <property type="component" value="Chromosome 1"/>
</dbReference>
<dbReference type="RNAct" id="P50336">
    <property type="molecule type" value="protein"/>
</dbReference>
<dbReference type="Bgee" id="ENSG00000143224">
    <property type="expression patterns" value="Expressed in right uterine tube and 182 other cell types or tissues"/>
</dbReference>
<dbReference type="ExpressionAtlas" id="P50336">
    <property type="expression patterns" value="baseline and differential"/>
</dbReference>
<dbReference type="GO" id="GO:0005743">
    <property type="term" value="C:mitochondrial inner membrane"/>
    <property type="evidence" value="ECO:0000250"/>
    <property type="project" value="UniProtKB"/>
</dbReference>
<dbReference type="GO" id="GO:0005758">
    <property type="term" value="C:mitochondrial intermembrane space"/>
    <property type="evidence" value="ECO:0000304"/>
    <property type="project" value="Reactome"/>
</dbReference>
<dbReference type="GO" id="GO:0031966">
    <property type="term" value="C:mitochondrial membrane"/>
    <property type="evidence" value="ECO:0000315"/>
    <property type="project" value="UniProtKB"/>
</dbReference>
<dbReference type="GO" id="GO:0005739">
    <property type="term" value="C:mitochondrion"/>
    <property type="evidence" value="ECO:0006056"/>
    <property type="project" value="FlyBase"/>
</dbReference>
<dbReference type="GO" id="GO:0050660">
    <property type="term" value="F:flavin adenine dinucleotide binding"/>
    <property type="evidence" value="ECO:0000304"/>
    <property type="project" value="UniProtKB"/>
</dbReference>
<dbReference type="GO" id="GO:0004729">
    <property type="term" value="F:oxygen-dependent protoporphyrinogen oxidase activity"/>
    <property type="evidence" value="ECO:0000314"/>
    <property type="project" value="UniProtKB"/>
</dbReference>
<dbReference type="GO" id="GO:0006784">
    <property type="term" value="P:heme A biosynthetic process"/>
    <property type="evidence" value="ECO:0007669"/>
    <property type="project" value="Ensembl"/>
</dbReference>
<dbReference type="GO" id="GO:0006785">
    <property type="term" value="P:heme B biosynthetic process"/>
    <property type="evidence" value="ECO:0000314"/>
    <property type="project" value="UniProt"/>
</dbReference>
<dbReference type="GO" id="GO:0006783">
    <property type="term" value="P:heme biosynthetic process"/>
    <property type="evidence" value="ECO:0000314"/>
    <property type="project" value="UniProtKB"/>
</dbReference>
<dbReference type="GO" id="GO:0048034">
    <property type="term" value="P:heme O biosynthetic process"/>
    <property type="evidence" value="ECO:0007669"/>
    <property type="project" value="Ensembl"/>
</dbReference>
<dbReference type="GO" id="GO:0006779">
    <property type="term" value="P:porphyrin-containing compound biosynthetic process"/>
    <property type="evidence" value="ECO:0000314"/>
    <property type="project" value="UniProtKB"/>
</dbReference>
<dbReference type="GO" id="GO:0006782">
    <property type="term" value="P:protoporphyrinogen IX biosynthetic process"/>
    <property type="evidence" value="ECO:0007669"/>
    <property type="project" value="UniProtKB-UniPathway"/>
</dbReference>
<dbReference type="GO" id="GO:0009410">
    <property type="term" value="P:response to xenobiotic stimulus"/>
    <property type="evidence" value="ECO:0007669"/>
    <property type="project" value="Ensembl"/>
</dbReference>
<dbReference type="FunFam" id="3.50.50.60:FF:000133">
    <property type="entry name" value="Protoporphyrinogen oxidase"/>
    <property type="match status" value="1"/>
</dbReference>
<dbReference type="Gene3D" id="3.50.50.60">
    <property type="entry name" value="FAD/NAD(P)-binding domain"/>
    <property type="match status" value="1"/>
</dbReference>
<dbReference type="InterPro" id="IPR002937">
    <property type="entry name" value="Amino_oxidase"/>
</dbReference>
<dbReference type="InterPro" id="IPR036188">
    <property type="entry name" value="FAD/NAD-bd_sf"/>
</dbReference>
<dbReference type="InterPro" id="IPR004572">
    <property type="entry name" value="Protoporphyrinogen_oxidase"/>
</dbReference>
<dbReference type="InterPro" id="IPR050464">
    <property type="entry name" value="Zeta_carotene_desat/Oxidored"/>
</dbReference>
<dbReference type="NCBIfam" id="TIGR00562">
    <property type="entry name" value="proto_IX_ox"/>
    <property type="match status" value="1"/>
</dbReference>
<dbReference type="PANTHER" id="PTHR42923">
    <property type="entry name" value="PROTOPORPHYRINOGEN OXIDASE"/>
    <property type="match status" value="1"/>
</dbReference>
<dbReference type="PANTHER" id="PTHR42923:SF3">
    <property type="entry name" value="PROTOPORPHYRINOGEN OXIDASE"/>
    <property type="match status" value="1"/>
</dbReference>
<dbReference type="Pfam" id="PF01593">
    <property type="entry name" value="Amino_oxidase"/>
    <property type="match status" value="1"/>
</dbReference>
<dbReference type="SUPFAM" id="SSF54373">
    <property type="entry name" value="FAD-linked reductases, C-terminal domain"/>
    <property type="match status" value="1"/>
</dbReference>
<dbReference type="SUPFAM" id="SSF51905">
    <property type="entry name" value="FAD/NAD(P)-binding domain"/>
    <property type="match status" value="1"/>
</dbReference>
<sequence length="477" mass="50765">MGRTVVVLGGGISGLAASYHLSRAPCPPKVVLVESSERLGGWIRSVRGPNGAIFELGPRGIRPAGALGARTLLLVSELGLDSEVLPVRGDHPAAQNRFLYVGGALHALPTGLRGLLRPSPPFSKPLFWAGLRELTKPRGKEPDETVHSFAQRRLGPEVASLAMDSLCRGVFAGNSRELSIRSCFPSLFQAEQTHRSILLGLLLGAGRTPQPDSALIRQALAERWSQWSLRGGLEMLPQALETHLTSRGVSVLRGQPVCGLSLQAEGRWKVSLRDSSLEADHVISAIPASVLSELLPAEAAPLARALSAITAVSVAVVNLQYQGAHLPVQGFGHLVPSSEDPGVLGIVYDSVAFPEQDGSPPGLRVTVMLGGSWLQTLEASGCVLSQELFQQRAQEAAATQLGLKEMPSHCLVHLHKNCIPQYTLGHWQKLESARQFLTAHRLPLTLAGASYEGVAVNDCIESGRQAAVSVLGTEPNS</sequence>
<name>PPOX_HUMAN</name>
<reference key="1">
    <citation type="journal article" date="1995" name="J. Biol. Chem.">
        <title>Cloning of a human cDNA for protoporphyrinogen oxidase by complementation in vivo of a hemG mutant of Escherichia coli.</title>
        <authorList>
            <person name="Nishimura K."/>
            <person name="Taketani S."/>
            <person name="Inokuchi H."/>
        </authorList>
    </citation>
    <scope>NUCLEOTIDE SEQUENCE [MRNA]</scope>
    <scope>FUNCTION</scope>
    <source>
        <tissue>Placenta</tissue>
    </source>
</reference>
<reference key="2">
    <citation type="journal article" date="1996" name="Protein Sci.">
        <title>Human protoporphyrinogen oxidase: expression, purification, and characterization of the cloned enzyme.</title>
        <authorList>
            <person name="Dailey T.A."/>
            <person name="Dailey H.A."/>
        </authorList>
    </citation>
    <scope>NUCLEOTIDE SEQUENCE [MRNA]</scope>
    <scope>TISSUE SPECIFICITY</scope>
    <source>
        <tissue>Placenta</tissue>
    </source>
</reference>
<reference key="3">
    <citation type="journal article" date="1996" name="Biochem. Biophys. Res. Commun.">
        <title>Protoporphyrinogen oxidase: complete genomic sequence and polymorphisms in the human gene.</title>
        <authorList>
            <person name="Puy H."/>
            <person name="Robreau A.-M."/>
            <person name="Rosipal R."/>
            <person name="Nordmann Y."/>
            <person name="Deybach J.-C."/>
        </authorList>
    </citation>
    <scope>NUCLEOTIDE SEQUENCE [GENOMIC DNA]</scope>
    <scope>VARIANT HIS-304</scope>
</reference>
<reference key="4">
    <citation type="journal article" date="2006" name="Nature">
        <title>The DNA sequence and biological annotation of human chromosome 1.</title>
        <authorList>
            <person name="Gregory S.G."/>
            <person name="Barlow K.F."/>
            <person name="McLay K.E."/>
            <person name="Kaul R."/>
            <person name="Swarbreck D."/>
            <person name="Dunham A."/>
            <person name="Scott C.E."/>
            <person name="Howe K.L."/>
            <person name="Woodfine K."/>
            <person name="Spencer C.C.A."/>
            <person name="Jones M.C."/>
            <person name="Gillson C."/>
            <person name="Searle S."/>
            <person name="Zhou Y."/>
            <person name="Kokocinski F."/>
            <person name="McDonald L."/>
            <person name="Evans R."/>
            <person name="Phillips K."/>
            <person name="Atkinson A."/>
            <person name="Cooper R."/>
            <person name="Jones C."/>
            <person name="Hall R.E."/>
            <person name="Andrews T.D."/>
            <person name="Lloyd C."/>
            <person name="Ainscough R."/>
            <person name="Almeida J.P."/>
            <person name="Ambrose K.D."/>
            <person name="Anderson F."/>
            <person name="Andrew R.W."/>
            <person name="Ashwell R.I.S."/>
            <person name="Aubin K."/>
            <person name="Babbage A.K."/>
            <person name="Bagguley C.L."/>
            <person name="Bailey J."/>
            <person name="Beasley H."/>
            <person name="Bethel G."/>
            <person name="Bird C.P."/>
            <person name="Bray-Allen S."/>
            <person name="Brown J.Y."/>
            <person name="Brown A.J."/>
            <person name="Buckley D."/>
            <person name="Burton J."/>
            <person name="Bye J."/>
            <person name="Carder C."/>
            <person name="Chapman J.C."/>
            <person name="Clark S.Y."/>
            <person name="Clarke G."/>
            <person name="Clee C."/>
            <person name="Cobley V."/>
            <person name="Collier R.E."/>
            <person name="Corby N."/>
            <person name="Coville G.J."/>
            <person name="Davies J."/>
            <person name="Deadman R."/>
            <person name="Dunn M."/>
            <person name="Earthrowl M."/>
            <person name="Ellington A.G."/>
            <person name="Errington H."/>
            <person name="Frankish A."/>
            <person name="Frankland J."/>
            <person name="French L."/>
            <person name="Garner P."/>
            <person name="Garnett J."/>
            <person name="Gay L."/>
            <person name="Ghori M.R.J."/>
            <person name="Gibson R."/>
            <person name="Gilby L.M."/>
            <person name="Gillett W."/>
            <person name="Glithero R.J."/>
            <person name="Grafham D.V."/>
            <person name="Griffiths C."/>
            <person name="Griffiths-Jones S."/>
            <person name="Grocock R."/>
            <person name="Hammond S."/>
            <person name="Harrison E.S.I."/>
            <person name="Hart E."/>
            <person name="Haugen E."/>
            <person name="Heath P.D."/>
            <person name="Holmes S."/>
            <person name="Holt K."/>
            <person name="Howden P.J."/>
            <person name="Hunt A.R."/>
            <person name="Hunt S.E."/>
            <person name="Hunter G."/>
            <person name="Isherwood J."/>
            <person name="James R."/>
            <person name="Johnson C."/>
            <person name="Johnson D."/>
            <person name="Joy A."/>
            <person name="Kay M."/>
            <person name="Kershaw J.K."/>
            <person name="Kibukawa M."/>
            <person name="Kimberley A.M."/>
            <person name="King A."/>
            <person name="Knights A.J."/>
            <person name="Lad H."/>
            <person name="Laird G."/>
            <person name="Lawlor S."/>
            <person name="Leongamornlert D.A."/>
            <person name="Lloyd D.M."/>
            <person name="Loveland J."/>
            <person name="Lovell J."/>
            <person name="Lush M.J."/>
            <person name="Lyne R."/>
            <person name="Martin S."/>
            <person name="Mashreghi-Mohammadi M."/>
            <person name="Matthews L."/>
            <person name="Matthews N.S.W."/>
            <person name="McLaren S."/>
            <person name="Milne S."/>
            <person name="Mistry S."/>
            <person name="Moore M.J.F."/>
            <person name="Nickerson T."/>
            <person name="O'Dell C.N."/>
            <person name="Oliver K."/>
            <person name="Palmeiri A."/>
            <person name="Palmer S.A."/>
            <person name="Parker A."/>
            <person name="Patel D."/>
            <person name="Pearce A.V."/>
            <person name="Peck A.I."/>
            <person name="Pelan S."/>
            <person name="Phelps K."/>
            <person name="Phillimore B.J."/>
            <person name="Plumb R."/>
            <person name="Rajan J."/>
            <person name="Raymond C."/>
            <person name="Rouse G."/>
            <person name="Saenphimmachak C."/>
            <person name="Sehra H.K."/>
            <person name="Sheridan E."/>
            <person name="Shownkeen R."/>
            <person name="Sims S."/>
            <person name="Skuce C.D."/>
            <person name="Smith M."/>
            <person name="Steward C."/>
            <person name="Subramanian S."/>
            <person name="Sycamore N."/>
            <person name="Tracey A."/>
            <person name="Tromans A."/>
            <person name="Van Helmond Z."/>
            <person name="Wall M."/>
            <person name="Wallis J.M."/>
            <person name="White S."/>
            <person name="Whitehead S.L."/>
            <person name="Wilkinson J.E."/>
            <person name="Willey D.L."/>
            <person name="Williams H."/>
            <person name="Wilming L."/>
            <person name="Wray P.W."/>
            <person name="Wu Z."/>
            <person name="Coulson A."/>
            <person name="Vaudin M."/>
            <person name="Sulston J.E."/>
            <person name="Durbin R.M."/>
            <person name="Hubbard T."/>
            <person name="Wooster R."/>
            <person name="Dunham I."/>
            <person name="Carter N.P."/>
            <person name="McVean G."/>
            <person name="Ross M.T."/>
            <person name="Harrow J."/>
            <person name="Olson M.V."/>
            <person name="Beck S."/>
            <person name="Rogers J."/>
            <person name="Bentley D.R."/>
        </authorList>
    </citation>
    <scope>NUCLEOTIDE SEQUENCE [LARGE SCALE GENOMIC DNA]</scope>
</reference>
<reference key="5">
    <citation type="submission" date="2005-09" db="EMBL/GenBank/DDBJ databases">
        <authorList>
            <person name="Mural R.J."/>
            <person name="Istrail S."/>
            <person name="Sutton G.G."/>
            <person name="Florea L."/>
            <person name="Halpern A.L."/>
            <person name="Mobarry C.M."/>
            <person name="Lippert R."/>
            <person name="Walenz B."/>
            <person name="Shatkay H."/>
            <person name="Dew I."/>
            <person name="Miller J.R."/>
            <person name="Flanigan M.J."/>
            <person name="Edwards N.J."/>
            <person name="Bolanos R."/>
            <person name="Fasulo D."/>
            <person name="Halldorsson B.V."/>
            <person name="Hannenhalli S."/>
            <person name="Turner R."/>
            <person name="Yooseph S."/>
            <person name="Lu F."/>
            <person name="Nusskern D.R."/>
            <person name="Shue B.C."/>
            <person name="Zheng X.H."/>
            <person name="Zhong F."/>
            <person name="Delcher A.L."/>
            <person name="Huson D.H."/>
            <person name="Kravitz S.A."/>
            <person name="Mouchard L."/>
            <person name="Reinert K."/>
            <person name="Remington K.A."/>
            <person name="Clark A.G."/>
            <person name="Waterman M.S."/>
            <person name="Eichler E.E."/>
            <person name="Adams M.D."/>
            <person name="Hunkapiller M.W."/>
            <person name="Myers E.W."/>
            <person name="Venter J.C."/>
        </authorList>
    </citation>
    <scope>NUCLEOTIDE SEQUENCE [LARGE SCALE GENOMIC DNA]</scope>
</reference>
<reference key="6">
    <citation type="journal article" date="2004" name="Genome Res.">
        <title>The status, quality, and expansion of the NIH full-length cDNA project: the Mammalian Gene Collection (MGC).</title>
        <authorList>
            <consortium name="The MGC Project Team"/>
        </authorList>
    </citation>
    <scope>NUCLEOTIDE SEQUENCE [LARGE SCALE MRNA]</scope>
    <source>
        <tissue>Lung</tissue>
    </source>
</reference>
<reference key="7">
    <citation type="journal article" date="2011" name="BMC Syst. Biol.">
        <title>Initial characterization of the human central proteome.</title>
        <authorList>
            <person name="Burkard T.R."/>
            <person name="Planyavsky M."/>
            <person name="Kaupe I."/>
            <person name="Breitwieser F.P."/>
            <person name="Buerckstuemmer T."/>
            <person name="Bennett K.L."/>
            <person name="Superti-Furga G."/>
            <person name="Colinge J."/>
        </authorList>
    </citation>
    <scope>IDENTIFICATION BY MASS SPECTROMETRY [LARGE SCALE ANALYSIS]</scope>
</reference>
<reference key="8">
    <citation type="journal article" date="2015" name="Proteomics">
        <title>N-terminome analysis of the human mitochondrial proteome.</title>
        <authorList>
            <person name="Vaca Jacome A.S."/>
            <person name="Rabilloud T."/>
            <person name="Schaeffer-Reiss C."/>
            <person name="Rompais M."/>
            <person name="Ayoub D."/>
            <person name="Lane L."/>
            <person name="Bairoch A."/>
            <person name="Van Dorsselaer A."/>
            <person name="Carapito C."/>
        </authorList>
    </citation>
    <scope>IDENTIFICATION BY MASS SPECTROMETRY [LARGE SCALE ANALYSIS]</scope>
</reference>
<reference key="9">
    <citation type="journal article" date="2011" name="FASEB J.">
        <title>Structural insight into human variegate porphyria disease.</title>
        <authorList>
            <person name="Qin X."/>
            <person name="Tan Y."/>
            <person name="Wang L."/>
            <person name="Wang Z."/>
            <person name="Wang B."/>
            <person name="Wen X."/>
            <person name="Yang G."/>
            <person name="Xi Z."/>
            <person name="Shen Y."/>
        </authorList>
    </citation>
    <scope>X-RAY CRYSTALLOGRAPHY (1.90 ANGSTROMS) IN COMPLEX WITH FAD AND ACIFLUORFEN</scope>
    <scope>CATALYTIC ACTIVITY</scope>
    <scope>FUNCTION</scope>
    <scope>SUBUNIT</scope>
    <scope>CHARACTERIZATION OF VARIANTS VP ASP-11; THR-12; PHE-15; PRO-20; PRO-38; ALA-40; GLU-40; TRP-59; PRO-73; GLY-84; PRO-85; PRO-106; PRO-138; ASP-139; VAL-143; CYS-152; PRO-154; MET-158; HIS-168; VAL-178; VAL-205; CYS-217; GLY-224; ARG-232; ASP-282; ASN-283; PRO-295; ARG-330; ALA-332; GLY-335; CYS-348; ALA-349; PRO-350; ARG-358; ASP-397; PHE-401; PRO-433; PRO-444; ARG-448; PRO-450 AND ARG-453</scope>
    <scope>MUTAGENESIS OF LEU-74; ARG-97; LEU-166; GLY-169; SER-284; VAL-290; PHE-331; LEU-334; VAL-347 AND MET-368</scope>
</reference>
<reference key="10">
    <citation type="journal article" date="2013" name="J. Biol. Chem.">
        <title>Quantitative structural insight into human variegate porphyria disease.</title>
        <authorList>
            <person name="Wang B."/>
            <person name="Wen X."/>
            <person name="Qin X."/>
            <person name="Wang Z."/>
            <person name="Tan Y."/>
            <person name="Shen Y."/>
            <person name="Xi Z."/>
        </authorList>
    </citation>
    <scope>X-RAY CRYSTALLOGRAPHY (2.60 ANGSTROMS) OF MUTANTS GLY-59 AND GLN-59 IN COMPLEXES WITH FAD AND ACIFLUORFEN</scope>
    <scope>FUNCTION</scope>
    <scope>CATALYTIC ACTIVITY</scope>
    <scope>MUTAGENESIS OF ARG-59; ARG-97; LEU-166; GLY-169; PHE-331; LEU-334; VAL-347 AND MET-368</scope>
    <scope>CHARACTERIZATION OF VARIANTS VP TRP-59; HIS-168; ARG-330; GLY-335; ALA-349; PHE-401 AND ARG-453</scope>
</reference>
<reference key="11">
    <citation type="journal article" date="1996" name="Hum. Mol. Genet.">
        <title>Mutations in the protoporphyrinogen oxidase gene in patients with variegate porphyria.</title>
        <authorList>
            <person name="Deybach J.-C."/>
            <person name="Puy H."/>
            <person name="Robreau A.-M."/>
            <person name="Lamoril J."/>
            <person name="da Silva V."/>
            <person name="Grandchamp B."/>
            <person name="Nordmann Y."/>
        </authorList>
    </citation>
    <scope>VARIANT VP ARG-232</scope>
    <scope>VARIANT HIS-304</scope>
</reference>
<reference key="12">
    <citation type="journal article" date="1996" name="Hum. Mol. Genet.">
        <title>Identification of three mutations and associated haplotypes in the protoporphyrinogen oxidase gene in South African families with variegate porphyria.</title>
        <authorList>
            <person name="Warnich L."/>
            <person name="Kotze M.J."/>
            <person name="Groenewald I.M."/>
            <person name="Groenewald J.Z."/>
            <person name="van Brakel M.G."/>
            <person name="van Heerden C.J."/>
            <person name="de Villiers J.N."/>
            <person name="van de Ven W.J."/>
            <person name="Schoenmakers E.F."/>
            <person name="Taketani S."/>
            <person name="Retief A.E."/>
        </authorList>
    </citation>
    <scope>VARIANTS VP PRO-20; TRP-59 AND CYS-168</scope>
</reference>
<reference key="13">
    <citation type="journal article" date="1996" name="Nat. Genet.">
        <title>A R59W mutation in human protoporphyrinogen oxidase results in decreased enzyme activity and is prevalent in South Africans with variegate porphyria.</title>
        <authorList>
            <person name="Meissner P.N."/>
            <person name="Dailey T.A."/>
            <person name="Hift R.J."/>
            <person name="Ziman M."/>
            <person name="Corrigall A.V."/>
            <person name="Roberts A.G."/>
            <person name="Meissner D.M."/>
            <person name="Kirsch R.E."/>
            <person name="Dailey H.A."/>
        </authorList>
    </citation>
    <scope>INVOLVEMENT IN VPCO</scope>
    <scope>VARIANTS VPCO TRP-59 AND CYS-168</scope>
</reference>
<reference key="14">
    <citation type="journal article" date="1998" name="Arch. Dermatol. Res.">
        <title>The genetic basis of 'Scarsdale Gourmet Diet' variegate porphyria: a missense mutation in the protoporphyrinogen oxidase gene.</title>
        <authorList>
            <person name="Frank J."/>
            <person name="Poh-Fitzpatrick M.B."/>
            <person name="King L.E. Jr."/>
            <person name="Christiano A.M."/>
        </authorList>
    </citation>
    <scope>VARIANT VP CYS-152</scope>
</reference>
<reference key="15">
    <citation type="journal article" date="1998" name="J. Med. Genet.">
        <title>Molecular basis of variegate porphyria: a missense mutation in the protoporphyrinogen oxidase gene.</title>
        <authorList>
            <person name="Frank J."/>
            <person name="Lam H."/>
            <person name="Zaider E."/>
            <person name="Poh-Fitzpatrick M."/>
            <person name="Christiano A.M."/>
        </authorList>
    </citation>
    <scope>VARIANT VPCO PRO-450</scope>
</reference>
<reference key="16">
    <citation type="journal article" date="1998" name="Hum. Mol. Genet.">
        <title>Molecular characterization of homozygous variegate porphyria.</title>
        <authorList>
            <person name="Roberts A.G."/>
            <person name="Puy H."/>
            <person name="Dailey T.A."/>
            <person name="Morgan R.R."/>
            <person name="Whatley S.D."/>
            <person name="Dailey H.A."/>
            <person name="Martasek P."/>
            <person name="Nordmann Y."/>
            <person name="Deybach J.C."/>
            <person name="Elder G.H."/>
        </authorList>
    </citation>
    <scope>VARIANTS VPCO GLU-169; ALA-349; ARG-358 AND PRO-433</scope>
    <scope>CHARACTERIZATION OF VARIANTS VPCO GLU-169; ALA-349; ARG-358 AND PRO-433</scope>
</reference>
<reference key="17">
    <citation type="journal article" date="1999" name="Am. J. Hum. Genet.">
        <title>Variegate porphyria in Western Europe: identification of PPOX gene mutations in 104 families, extent of allelic heterogeneity, and absence of correlation between phenotype and type of mutation.</title>
        <authorList>
            <person name="Whatley S.D."/>
            <person name="Puy H."/>
            <person name="Morgan R.R."/>
            <person name="Robreau A.M."/>
            <person name="Roberts A.G."/>
            <person name="Nordmann Y."/>
            <person name="Elder G.H."/>
            <person name="Deybach J.C."/>
        </authorList>
    </citation>
    <scope>VARIANTS ARG-256 AND HIS-304</scope>
    <scope>VARIANTS VP PRO-38; GLU-40; PRO-73; GLY-84; PRO-85; VAL-143; CYS-152; PRO-154; MET-158; HIS-168; VAL-172; ARG-232; HIS-281 DEL; ASP-282; PRO-295; GLY-335; PRO-350; PRO-444; ARG-453 AND VAL-453</scope>
</reference>
<reference key="18">
    <citation type="journal article" date="2000" name="Clin. Biochem.">
        <title>Three novel mutations in the protoporphyrinogen oxidase gene in Japanese patients with variegate porphyria.</title>
        <authorList>
            <person name="Maeda N."/>
            <person name="Horie Y."/>
            <person name="Sasaki Y."/>
            <person name="Adachi K."/>
            <person name="Nanba E."/>
            <person name="Nishida K."/>
            <person name="Saigo R."/>
            <person name="Nakagawa M."/>
            <person name="Kawasaki H."/>
            <person name="Kudo Y."/>
            <person name="Kondo M."/>
        </authorList>
    </citation>
    <scope>VARIANT VP ARG-448</scope>
</reference>
<reference key="19">
    <citation type="journal article" date="2000" name="Hum. Mutat.">
        <title>Two new mutations (H106P and L178V) in the protoporphyrinogen oxidase gene in Argentinean patients with variegate porphyria.</title>
        <authorList>
            <person name="De Siervi A."/>
            <person name="Parera V.E."/>
            <person name="del C Batlle A.M."/>
            <person name="Rossetti M.V."/>
        </authorList>
    </citation>
    <scope>VARIANTS VP PRO-106 AND VAL-178</scope>
</reference>
<reference key="20">
    <citation type="journal article" date="2000" name="Mol. Genet. Metab.">
        <title>Homozygous variegate porphyria in South Africa: genotypic analysis in two cases.</title>
        <authorList>
            <person name="Corrigall A.V."/>
            <person name="Hift R.J."/>
            <person name="Davids L.M."/>
            <person name="Hancock V."/>
            <person name="Meissner D."/>
            <person name="Kirsch R.E."/>
            <person name="Meissner P.N."/>
        </authorList>
    </citation>
    <scope>VARIANTS VPCO TRP-59; PRO-138 AND CYS-348</scope>
</reference>
<reference key="21">
    <citation type="journal article" date="2001" name="J. Invest. Dermatol.">
        <title>Homozygous variegate porphyria: 20 y follow-up and characterization of molecular defect.</title>
        <authorList>
            <person name="Kauppinen R."/>
            <person name="Timonen K."/>
            <person name="von und zu Fraunberg M."/>
            <person name="Laitinen E."/>
            <person name="Ahola H."/>
            <person name="Tenhunen R."/>
            <person name="Taketani S."/>
            <person name="Mustajoki P."/>
        </authorList>
    </citation>
    <scope>VARIANTS VPCO THR-12 AND ARG-256</scope>
    <scope>CHARACTERIZATION OF VARIANTS VPCO THR-12 AND ARG-256</scope>
</reference>
<reference key="22">
    <citation type="journal article" date="2001" name="J. Invest. Dermatol.">
        <title>A spectrum of novel mutations in the protoporphyrinogen oxidase gene in 13 families with variegate porphyria.</title>
        <authorList>
            <person name="Frank J."/>
            <person name="Jugert F.K."/>
            <person name="Merk H.F."/>
            <person name="Kalka K."/>
            <person name="Goerz G."/>
            <person name="Anderson K."/>
            <person name="Bickers D.R."/>
            <person name="Poh-Fitzpatrick M.B."/>
            <person name="Christiano A.M."/>
        </authorList>
    </citation>
    <scope>VARIANT VP SER-11</scope>
</reference>
<reference key="23">
    <citation type="journal article" date="2001" name="Mol. Genet. Metab.">
        <title>Identification of the first variegate porphyria mutation in an indigenous black South African and further evidence for heterogeneity in variegate porphyria.</title>
        <authorList>
            <person name="Corrigall A.V."/>
            <person name="Hift R.J."/>
            <person name="Davids L.M."/>
            <person name="Hancock V."/>
            <person name="Meissner D."/>
            <person name="Kirsch R.E."/>
            <person name="Meissner P.N."/>
        </authorList>
    </citation>
    <scope>VARIANTS VP PHE-15 AND MET-290</scope>
</reference>
<reference key="24">
    <citation type="journal article" date="2001" name="Mol. Med.">
        <title>Expression and characterization of six mutations in the protoporphyrinogen oxidase gene among Finnish variegate porphyria patients.</title>
        <authorList>
            <person name="von und zu Fraunberg M."/>
            <person name="Tenhunen R."/>
            <person name="Kauppinen R."/>
        </authorList>
    </citation>
    <scope>VARIANTS VP CYS-152 AND PHE-401</scope>
    <scope>CHARACTERIZATION OF VARIANT VP CYS-152</scope>
</reference>
<reference key="25">
    <citation type="journal article" date="2002" name="Intern. Med. J.">
        <title>Variegate porphyria in Western Australian Aboriginal patients.</title>
        <authorList>
            <person name="Rossi E."/>
            <person name="Chin C.Y."/>
            <person name="Beilby J.P."/>
            <person name="Waso H.F."/>
            <person name="Warnich L."/>
        </authorList>
    </citation>
    <scope>VARIANTS VP TRP-59; CYS-217 AND SER-236</scope>
</reference>
<reference key="26">
    <citation type="journal article" date="2003" name="Biochim. Biophys. Acta">
        <title>Kinetic and physical characterisation of recombinant wild-type and mutant human protoporphyrinogen oxidases.</title>
        <authorList>
            <person name="Maneli M.H."/>
            <person name="Corrigall A.V."/>
            <person name="Klump H.H."/>
            <person name="Davids L.M."/>
            <person name="Kirsch R.E."/>
            <person name="Meissner P.N."/>
        </authorList>
    </citation>
    <scope>CHARACTERIZATION OF VARIANTS VP PRO-20; TRP-59; CYS-168 AND CYS-348</scope>
</reference>
<reference key="27">
    <citation type="journal article" date="2003" name="Clin. Genet.">
        <title>Nine novel mutations in the protoporphyrinogen oxidase gene in Swedish families with variegate porphyria.</title>
        <authorList>
            <person name="Wiman A."/>
            <person name="Harper P."/>
            <person name="Floderus Y."/>
        </authorList>
    </citation>
    <scope>VARIANTS VP CYS-152; LEU-158; VAL-205 AND ARG-330</scope>
</reference>
<reference key="28">
    <citation type="journal article" date="2003" name="Hum. Mutat.">
        <title>Genetic analysis of variegate porphyria (VP) in Italy: identification of six novel mutations in the protoporphyrinogen oxidase (PPOX) gene.</title>
        <authorList>
            <person name="D'Amato M."/>
            <person name="Bonuglia M."/>
            <person name="Barile S."/>
            <person name="Griso D."/>
            <person name="Macri A."/>
            <person name="Biolcati G."/>
        </authorList>
    </citation>
    <scope>VARIANT VP ASN-283</scope>
</reference>
<reference key="29">
    <citation type="journal article" date="2004" name="Hum. Genet.">
        <title>Modulation of penetrance by the wild-type allele in dominantly inherited erythropoietic protoporphyria and acute hepatic porphyrias.</title>
        <authorList>
            <person name="Gouya L."/>
            <person name="Puy H."/>
            <person name="Robreau A.-M."/>
            <person name="Lyoumi S."/>
            <person name="Lamoril J."/>
            <person name="Da Silva V."/>
            <person name="Grandchamp B."/>
            <person name="Deybach J.-C."/>
        </authorList>
    </citation>
    <scope>VARIANT VP ALA-40</scope>
</reference>
<reference key="30">
    <citation type="journal article" date="2006" name="Br. J. Dermatol.">
        <title>A Chilean boy with severe photosensitivity and finger shortening: the first case of homozygous variegate porphyria in South America.</title>
        <authorList>
            <person name="Poblete-Gutierrez P."/>
            <person name="Wolff C."/>
            <person name="Farias R."/>
            <person name="Frank J."/>
        </authorList>
    </citation>
    <scope>VARIANT VP SER-232</scope>
</reference>
<reference key="31">
    <citation type="journal article" date="2006" name="Cell Biol. Int.">
        <title>Mitochondrial targeting of human protoporphyrinogen oxidase.</title>
        <authorList>
            <person name="Davids L.M."/>
            <person name="Corrigall A.V."/>
            <person name="Meissner P.N."/>
        </authorList>
    </citation>
    <scope>CHARACTERIZATION OF VARIANTS VP PRO-20; TRP-59 AND CYS-168</scope>
</reference>
<reference key="32">
    <citation type="journal article" date="2006" name="J. Eur. Acad. Dermatol. Venereol.">
        <title>Genetic studies in variegate porphyria in Spain. Identification of gene mutations and family study for carrier detection.</title>
        <authorList>
            <person name="Lecha M."/>
            <person name="Badenas C."/>
            <person name="Puig S."/>
            <person name="Orfila J."/>
            <person name="Mila M."/>
            <person name="To-Figueras J."/>
            <person name="Munoz C."/>
            <person name="Mercader P."/>
            <person name="Herrero C."/>
        </authorList>
    </citation>
    <scope>VARIANT VP ARG-224</scope>
</reference>
<reference key="33">
    <citation type="journal article" date="2006" name="Swiss. Med. Wkly.">
        <title>Swiss patients with variegate porphyria have unique mutations.</title>
        <authorList>
            <person name="Schneider-Yin X."/>
            <person name="Minder E.I."/>
        </authorList>
    </citation>
    <scope>VARIANT VP ASP-11</scope>
</reference>
<reference key="34">
    <citation type="journal article" date="2007" name="Hum. Genet.">
        <title>Novel human pathological mutations. Gene symbol: PPOX. Disease: porphyria, variegate.</title>
        <authorList>
            <person name="Ausenda S."/>
            <person name="Di Pierro E."/>
            <person name="Brancaleoni V."/>
            <person name="Besana V."/>
            <person name="Cappellini M.D."/>
        </authorList>
    </citation>
    <scope>VARIANT VP ASP-139</scope>
</reference>
<reference key="35">
    <citation type="journal article" date="2008" name="BMC Med. Genet.">
        <title>Genetic and biochemical studies in Argentinean patients with variegate porphyria.</title>
        <authorList>
            <person name="Rossetti M.V."/>
            <person name="Granata B.X."/>
            <person name="Giudice J."/>
            <person name="Parera V.E."/>
            <person name="Batlle A."/>
        </authorList>
    </citation>
    <scope>VARIANTS VP VAL-34; GLY-224 AND ALA-332</scope>
</reference>
<reference key="36">
    <citation type="journal article" date="2009" name="Hum. Genet.">
        <title>Novel human pathological mutations. Gene symbol: PPOX. Disease: porphyria, variegate.</title>
        <authorList>
            <person name="Ausenda S."/>
            <person name="Moriondo V."/>
            <person name="Marchini S."/>
            <person name="Besana V."/>
            <person name="Di Pierro E."/>
            <person name="Brancaleoni V."/>
            <person name="Ventura P."/>
            <person name="Rocchi E."/>
            <person name="Cappellini M.D."/>
        </authorList>
    </citation>
    <scope>VARIANT VP ASP-397</scope>
</reference>
<reference key="37">
    <citation type="journal article" date="2012" name="JIMD Rep.">
        <title>Functional characterization of five protoporphyrinogen oxidase missense mutations found in Argentinean variegate porphyria patients.</title>
        <authorList>
            <person name="Mendez M."/>
            <person name="Granata B.X."/>
            <person name="Jimenez M.J."/>
            <person name="Parera V.E."/>
            <person name="Batlle A."/>
            <person name="de Salamanca R.E."/>
            <person name="Rossetti M.V."/>
        </authorList>
    </citation>
    <scope>VARIANTS VP VAL-34; PHE-76; GLY-224; ALA-332 AND CYS-422</scope>
    <scope>CHARACTERIZATION OF VARIANTS VP VAL-34; PHE-76; GLY-224; ALA-332 AND CYS-422</scope>
</reference>
<reference key="38">
    <citation type="journal article" date="2013" name="Clin. Exp. Dermatol.">
        <title>Homozygous variegate porphyria presenting with developmental and language delay in childhood.</title>
        <authorList>
            <person name="Pinder V.A."/>
            <person name="Holden S.T."/>
            <person name="Deshpande C."/>
            <person name="Siddiqui A."/>
            <person name="Mellerio J.E."/>
            <person name="Wraige E."/>
            <person name="Powell A.M."/>
        </authorList>
    </citation>
    <scope>VARIANTS VP ARG-57 AND ARG-420</scope>
</reference>
<reference key="39">
    <citation type="journal article" date="2021" name="Clin. Chim. Acta">
        <title>Novel PPOX exonic mutation inducing aberrant splicing in a patient with homozygous variegate porphyria.</title>
        <authorList>
            <person name="Cho S.Y."/>
            <person name="Lau E.Y."/>
            <person name="Luk D.C."/>
            <person name="Law C.Y."/>
            <person name="Lai C.K."/>
            <person name="Lam C.W."/>
        </authorList>
    </citation>
    <scope>INVOLVEMENT IN VPCO</scope>
</reference>
<gene>
    <name type="primary">PPOX</name>
</gene>
<feature type="chain" id="PRO_0000135270" description="Protoporphyrinogen oxidase">
    <location>
        <begin position="1"/>
        <end position="477"/>
    </location>
</feature>
<feature type="binding site" evidence="22">
    <location>
        <begin position="9"/>
        <end position="14"/>
    </location>
    <ligand>
        <name>FAD</name>
        <dbReference type="ChEBI" id="CHEBI:57692"/>
    </ligand>
</feature>
<feature type="binding site" evidence="22">
    <location>
        <begin position="34"/>
        <end position="35"/>
    </location>
    <ligand>
        <name>FAD</name>
        <dbReference type="ChEBI" id="CHEBI:57692"/>
    </ligand>
</feature>
<feature type="binding site" evidence="22">
    <location>
        <position position="42"/>
    </location>
    <ligand>
        <name>FAD</name>
        <dbReference type="ChEBI" id="CHEBI:57692"/>
    </ligand>
</feature>
<feature type="binding site" evidence="22">
    <location>
        <begin position="57"/>
        <end position="60"/>
    </location>
    <ligand>
        <name>FAD</name>
        <dbReference type="ChEBI" id="CHEBI:57692"/>
    </ligand>
</feature>
<feature type="binding site" evidence="22">
    <location>
        <position position="257"/>
    </location>
    <ligand>
        <name>FAD</name>
        <dbReference type="ChEBI" id="CHEBI:57692"/>
    </ligand>
</feature>
<feature type="binding site" evidence="22">
    <location>
        <position position="449"/>
    </location>
    <ligand>
        <name>FAD</name>
        <dbReference type="ChEBI" id="CHEBI:57692"/>
    </ligand>
</feature>
<feature type="binding site" evidence="22">
    <location>
        <begin position="454"/>
        <end position="456"/>
    </location>
    <ligand>
        <name>FAD</name>
        <dbReference type="ChEBI" id="CHEBI:57692"/>
    </ligand>
</feature>
<feature type="sequence variant" id="VAR_070378" description="In VP; abolishes enzyme activity; impairs protein folding and/or stability." evidence="18 22">
    <original>G</original>
    <variation>D</variation>
    <location>
        <position position="11"/>
    </location>
</feature>
<feature type="sequence variant" id="VAR_070377" description="In VP." evidence="7">
    <original>G</original>
    <variation>S</variation>
    <location>
        <position position="11"/>
    </location>
</feature>
<feature type="sequence variant" id="VAR_070379" description="In VP and VPCO; strongly decreases enzyme activity; impairs protein folding and/or stability; dbSNP:rs28936677." evidence="6 22">
    <original>I</original>
    <variation>T</variation>
    <location>
        <position position="12"/>
    </location>
</feature>
<feature type="sequence variant" id="VAR_070380" description="In VP; strongly decreases enzyme activity; impairs protein folding and/or stability; dbSNP:rs769452432." evidence="8 22">
    <original>L</original>
    <variation>F</variation>
    <location>
        <position position="15"/>
    </location>
</feature>
<feature type="sequence variant" id="VAR_070381" description="In VP; strongly decreases enzyme activity; more resistant to thermal denaturation than wild-type enzyme; abolishes mitochondrial protein targeting and localization; dbSNP:rs121918326." evidence="13 16 22 31">
    <original>H</original>
    <variation>P</variation>
    <location>
        <position position="20"/>
    </location>
</feature>
<feature type="sequence variant" id="VAR_070382" description="In VP; decreases enzyme activity." evidence="20 23">
    <original>E</original>
    <variation>V</variation>
    <location>
        <position position="34"/>
    </location>
</feature>
<feature type="sequence variant" id="VAR_070383" description="In VP; strongly decreases enzyme activity; impairs protein folding and/or stability." evidence="2 22">
    <original>R</original>
    <variation>P</variation>
    <location>
        <position position="38"/>
    </location>
</feature>
<feature type="sequence variant" id="VAR_070384" description="In VP; strongly decreases enzyme activity; impairs protein folding and/or stability." evidence="14 22">
    <original>G</original>
    <variation>A</variation>
    <location>
        <position position="40"/>
    </location>
</feature>
<feature type="sequence variant" id="VAR_070385" description="In VP; abolishes enzyme activity; impairs protein folding and/or stability; dbSNP:rs1317835140." evidence="2 22">
    <original>G</original>
    <variation>E</variation>
    <location>
        <position position="40"/>
    </location>
</feature>
<feature type="sequence variant" id="VAR_070386" description="In VP; dbSNP:rs764352037." evidence="25">
    <original>G</original>
    <variation>R</variation>
    <location>
        <position position="57"/>
    </location>
</feature>
<feature type="sequence variant" id="VAR_003686" description="In VP and VPCO; strongly decreases enzyme activity; does not affect mitochondrial protein targeting and localization; more resistant to thermal denaturation than wild-type enzyme; dbSNP:rs121918324." evidence="3 10 13 16 22 24 28 31">
    <original>R</original>
    <variation>W</variation>
    <location>
        <position position="59"/>
    </location>
</feature>
<feature type="sequence variant" id="VAR_070387" description="In VP; strongly decreases enzyme activity; impairs protein folding and/or stability." evidence="2 22">
    <original>L</original>
    <variation>P</variation>
    <location>
        <position position="73"/>
    </location>
</feature>
<feature type="sequence variant" id="VAR_070388" description="In VP; decreases enzyme activity." evidence="23">
    <original>S</original>
    <variation>F</variation>
    <location>
        <position position="76"/>
    </location>
</feature>
<feature type="sequence variant" id="VAR_070389" description="In VP; strongly decreases enzyme activity; impairs protein folding and/or stability." evidence="2 22">
    <original>V</original>
    <variation>G</variation>
    <location>
        <position position="84"/>
    </location>
</feature>
<feature type="sequence variant" id="VAR_070390" description="In VP; abolishes enzyme activity; impairs protein folding and/or stability." evidence="2 22">
    <original>L</original>
    <variation>P</variation>
    <location>
        <position position="85"/>
    </location>
</feature>
<feature type="sequence variant" id="VAR_070391" description="In VP; strongly decreases enzyme activity." evidence="5 22">
    <original>H</original>
    <variation>P</variation>
    <location>
        <position position="106"/>
    </location>
</feature>
<feature type="sequence variant" id="VAR_070392" description="In VP and VPCO; slightly decreases enzyme activity; dbSNP:rs767419411." evidence="3 22">
    <original>R</original>
    <variation>P</variation>
    <location>
        <position position="138"/>
    </location>
</feature>
<feature type="sequence variant" id="VAR_070393" description="In VP; strongly decreases enzyme activity; dbSNP:rs369381477." evidence="19 22">
    <original>G</original>
    <variation>D</variation>
    <location>
        <position position="139"/>
    </location>
</feature>
<feature type="sequence variant" id="VAR_070394" description="In VP; strongly decreases enzyme activity." evidence="2 22">
    <original>D</original>
    <variation>V</variation>
    <location>
        <position position="143"/>
    </location>
</feature>
<feature type="sequence variant" id="VAR_003687" description="In VP; strongly decreases enzyme activity." evidence="2 9 12 22 34">
    <original>R</original>
    <variation>C</variation>
    <location>
        <position position="152"/>
    </location>
</feature>
<feature type="sequence variant" id="VAR_070395" description="In VP; strongly decreases enzyme activity." evidence="2 22">
    <original>L</original>
    <variation>P</variation>
    <location>
        <position position="154"/>
    </location>
</feature>
<feature type="sequence variant" id="VAR_070396" description="In VP." evidence="12">
    <original>V</original>
    <variation>L</variation>
    <location>
        <position position="158"/>
    </location>
</feature>
<feature type="sequence variant" id="VAR_070397" description="In VP; strongly decreases enzyme activity." evidence="2 22">
    <original>V</original>
    <variation>M</variation>
    <location>
        <position position="158"/>
    </location>
</feature>
<feature type="sequence variant" id="VAR_003688" description="In VP and VPCO; strongly decreases enzyme activity; does not affect mitochondrial protein targeting and localization; dbSNP:rs121918325." evidence="13 16 28 31">
    <original>R</original>
    <variation>C</variation>
    <location>
        <position position="168"/>
    </location>
</feature>
<feature type="sequence variant" id="VAR_070398" description="In VP; strongly decreases enzyme activity; dbSNP:rs41270025." evidence="2 22 24">
    <original>R</original>
    <variation>H</variation>
    <location>
        <position position="168"/>
    </location>
</feature>
<feature type="sequence variant" id="VAR_070399" description="In VPCO; strongly decreases enzyme activity." evidence="35">
    <original>G</original>
    <variation>E</variation>
    <location>
        <position position="169"/>
    </location>
</feature>
<feature type="sequence variant" id="VAR_070400" description="In VP." evidence="2">
    <original>A</original>
    <variation>V</variation>
    <location>
        <position position="172"/>
    </location>
</feature>
<feature type="sequence variant" id="VAR_070401" description="In VP; strongly decreases enzyme activity; dbSNP:rs757473753." evidence="5 22">
    <original>L</original>
    <variation>V</variation>
    <location>
        <position position="178"/>
    </location>
</feature>
<feature type="sequence variant" id="VAR_070402" description="In VP; no effect on enzyme activity." evidence="12 22">
    <original>A</original>
    <variation>V</variation>
    <location>
        <position position="205"/>
    </location>
</feature>
<feature type="sequence variant" id="VAR_070403" description="In VP; decreases enzyme activity; impairs protein folding and/or stability; dbSNP:rs751599052." evidence="10 22">
    <original>R</original>
    <variation>C</variation>
    <location>
        <position position="217"/>
    </location>
</feature>
<feature type="sequence variant" id="VAR_070404" description="In VP; abolishes enzyme activity; impairs protein folding and/or stability." evidence="20 22 23">
    <original>W</original>
    <variation>G</variation>
    <location>
        <position position="224"/>
    </location>
</feature>
<feature type="sequence variant" id="VAR_070405" description="In VP." evidence="17">
    <original>W</original>
    <variation>R</variation>
    <location>
        <position position="224"/>
    </location>
</feature>
<feature type="sequence variant" id="VAR_003689" description="In VP; strongly decreases enzyme activity; impairs protein folding and/or stability; dbSNP:rs121918323." evidence="2 22 32">
    <original>G</original>
    <variation>R</variation>
    <location>
        <position position="232"/>
    </location>
</feature>
<feature type="sequence variant" id="VAR_070406" description="In VP." evidence="15">
    <original>G</original>
    <variation>S</variation>
    <location>
        <position position="232"/>
    </location>
</feature>
<feature type="sequence variant" id="VAR_070407" description="In VP." evidence="10">
    <original>L</original>
    <variation>S</variation>
    <location>
        <position position="236"/>
    </location>
</feature>
<feature type="sequence variant" id="VAR_034395" description="In VPCO; likely benign; results in reduction of activity in a prokariotyc expression system but has normal activity when expressed in an eukaryotic system; dbSNP:rs12735723." evidence="2 6">
    <original>P</original>
    <variation>R</variation>
    <location>
        <position position="256"/>
    </location>
</feature>
<feature type="sequence variant" id="VAR_070408" description="In VP." evidence="2">
    <location>
        <position position="281"/>
    </location>
</feature>
<feature type="sequence variant" id="VAR_070409" description="In VP; strongly decreases enzyme activity; impairs protein folding and/or stability." evidence="2 22">
    <original>V</original>
    <variation>D</variation>
    <location>
        <position position="282"/>
    </location>
</feature>
<feature type="sequence variant" id="VAR_070410" description="In VP; strongly decreases enzyme activity; impairs protein folding and/or stability." evidence="11 22">
    <original>I</original>
    <variation>N</variation>
    <location>
        <position position="283"/>
    </location>
</feature>
<feature type="sequence variant" id="VAR_070411" description="In VP." evidence="8">
    <original>V</original>
    <variation>M</variation>
    <location>
        <position position="290"/>
    </location>
</feature>
<feature type="sequence variant" id="VAR_070412" description="In VP; strongly decreases enzyme activity; impairs protein folding and/or stability." evidence="2 22">
    <original>L</original>
    <variation>P</variation>
    <location>
        <position position="295"/>
    </location>
</feature>
<feature type="sequence variant" id="VAR_003690" description="In dbSNP:rs36013429." evidence="2 30 32">
    <original>R</original>
    <variation>H</variation>
    <location>
        <position position="304"/>
    </location>
</feature>
<feature type="sequence variant" id="VAR_070413" description="In VP; strongly decreases enzyme activity." evidence="12 22 24">
    <original>G</original>
    <variation>R</variation>
    <location>
        <position position="330"/>
    </location>
</feature>
<feature type="sequence variant" id="VAR_070414" description="In VP; abolishes activity; impairs protein folding and/or stability." evidence="20 22 23">
    <original>G</original>
    <variation>A</variation>
    <location>
        <position position="332"/>
    </location>
</feature>
<feature type="sequence variant" id="VAR_070415" description="In VP; strongly decreases enzyme activity; impairs protein folding and/or stability." evidence="2 22 24">
    <original>V</original>
    <variation>G</variation>
    <location>
        <position position="335"/>
    </location>
</feature>
<feature type="sequence variant" id="VAR_070416" description="In VP AND VPCO; results in enzyme activity decrease; impairs protein folding and/or stability; more resistant to thermal denaturation than wild-type enzyme; dbSNP:rs900431442." evidence="3 13 22">
    <original>Y</original>
    <variation>C</variation>
    <location>
        <position position="348"/>
    </location>
</feature>
<feature type="sequence variant" id="VAR_070417" description="In VPCO; decreases enzyme activity; dbSNP:rs28936676." evidence="22 24 35">
    <original>D</original>
    <variation>A</variation>
    <location>
        <position position="349"/>
    </location>
</feature>
<feature type="sequence variant" id="VAR_070418" description="In VP; abolishes activity; impairs protein folding and/or stability." evidence="2 22">
    <original>S</original>
    <variation>P</variation>
    <location>
        <position position="350"/>
    </location>
</feature>
<feature type="sequence variant" id="VAR_070419" description="In VPCO; strongly decreases enzyme activity; impairs protein folding and/or stability; dbSNP:rs374936130." evidence="22 35">
    <original>G</original>
    <variation>R</variation>
    <location>
        <position position="358"/>
    </location>
</feature>
<feature type="sequence variant" id="VAR_070420" description="In VP; strongly decreases enzyme activity; impairs protein folding and/or stability; dbSNP:rs141274934." evidence="21 22">
    <original>A</original>
    <variation>D</variation>
    <location>
        <position position="397"/>
    </location>
</feature>
<feature type="sequence variant" id="VAR_070421" description="In VP; strongly decreases enzyme activity; dbSNP:rs776530007." evidence="9 22 24">
    <original>L</original>
    <variation>F</variation>
    <location>
        <position position="401"/>
    </location>
</feature>
<feature type="sequence variant" id="VAR_070422" description="In VP." evidence="25">
    <original>P</original>
    <variation>R</variation>
    <location>
        <position position="420"/>
    </location>
</feature>
<feature type="sequence variant" id="VAR_070423" description="In VP; decreases enzyme activity." evidence="23">
    <original>Y</original>
    <variation>C</variation>
    <location>
        <position position="422"/>
    </location>
</feature>
<feature type="sequence variant" id="VAR_070424" description="In VP; decreases enzyme activity; impairs protein folding and/or stability; dbSNP:rs1361576529." evidence="22 35">
    <original>A</original>
    <variation>P</variation>
    <location>
        <position position="433"/>
    </location>
</feature>
<feature type="sequence variant" id="VAR_070425" description="In VP; strongly decreases enzyme activity." evidence="2 22">
    <original>L</original>
    <variation>P</variation>
    <location>
        <position position="444"/>
    </location>
</feature>
<feature type="sequence variant" id="VAR_070426" description="In VP; abolishes enzyme activity; impairs protein folding and/or stability." evidence="4 22">
    <original>G</original>
    <variation>R</variation>
    <location>
        <position position="448"/>
    </location>
</feature>
<feature type="sequence variant" id="VAR_070427" description="In VP AND VPCO; strongly decreases enzyme activity." evidence="22 33">
    <original>S</original>
    <variation>P</variation>
    <location>
        <position position="450"/>
    </location>
</feature>
<feature type="sequence variant" id="VAR_070428" description="In VP; strongly decreases enzyme activity; dbSNP:rs928944841." evidence="2 22 24">
    <original>G</original>
    <variation>R</variation>
    <location>
        <position position="453"/>
    </location>
</feature>
<feature type="sequence variant" id="VAR_070429" description="In VP." evidence="2">
    <original>G</original>
    <variation>V</variation>
    <location>
        <position position="453"/>
    </location>
</feature>
<feature type="mutagenesis site" description="Decreases enzyme activity by 75%." evidence="24">
    <original>R</original>
    <variation>G</variation>
    <location>
        <position position="59"/>
    </location>
</feature>
<feature type="mutagenesis site" description="Decreases enzyme activity by 90%. Strongly decreases affinity for protoporphyrinogen-IX." evidence="24">
    <original>R</original>
    <variation>Q</variation>
    <location>
        <position position="59"/>
    </location>
</feature>
<feature type="mutagenesis site" description="Abolishes enzyme activity. Impairs protein folding and/or stability." evidence="22">
    <original>L</original>
    <variation>P</variation>
    <location>
        <position position="74"/>
    </location>
</feature>
<feature type="mutagenesis site" description="Decreases enzyme activity by 89%. Impairs protein folding and/or stability." evidence="22 24">
    <original>R</original>
    <variation>D</variation>
    <location>
        <position position="97"/>
    </location>
</feature>
<feature type="mutagenesis site" description="Decreases enzyme activity by 95%." evidence="22 24">
    <original>L</original>
    <variation>N</variation>
    <location>
        <position position="166"/>
    </location>
</feature>
<feature type="mutagenesis site" description="Decreases enzyme activity by 64%." evidence="22 24">
    <original>G</original>
    <variation>A</variation>
    <location>
        <position position="169"/>
    </location>
</feature>
<feature type="mutagenesis site" description="Decreases enzyme activity by 87%. Impairs protein folding and/or stability." evidence="22">
    <original>S</original>
    <variation>I</variation>
    <location>
        <position position="284"/>
    </location>
</feature>
<feature type="mutagenesis site" description="No effect on enzyme activity." evidence="22">
    <original>V</original>
    <variation>L</variation>
    <location>
        <position position="290"/>
    </location>
</feature>
<feature type="mutagenesis site" description="Decreases enzyme activity by 50%." evidence="22 24">
    <original>F</original>
    <variation>A</variation>
    <location>
        <position position="331"/>
    </location>
</feature>
<feature type="mutagenesis site" description="Decreases enzyme activity by 86%." evidence="22 24">
    <original>L</original>
    <variation>A</variation>
    <location>
        <position position="334"/>
    </location>
</feature>
<feature type="mutagenesis site" description="Decreases enzyme activity by 45%." evidence="22 24">
    <original>V</original>
    <variation>A</variation>
    <location>
        <position position="347"/>
    </location>
</feature>
<feature type="mutagenesis site" description="Decreases enzyme activity by 52%." evidence="22 24">
    <original>M</original>
    <variation>A</variation>
    <location>
        <position position="368"/>
    </location>
</feature>
<feature type="strand" evidence="37">
    <location>
        <begin position="4"/>
        <end position="8"/>
    </location>
</feature>
<feature type="helix" evidence="37">
    <location>
        <begin position="12"/>
        <end position="22"/>
    </location>
</feature>
<feature type="strand" evidence="37">
    <location>
        <begin position="24"/>
        <end position="26"/>
    </location>
</feature>
<feature type="strand" evidence="37">
    <location>
        <begin position="29"/>
        <end position="33"/>
    </location>
</feature>
<feature type="strand" evidence="37">
    <location>
        <begin position="35"/>
        <end position="40"/>
    </location>
</feature>
<feature type="strand" evidence="37">
    <location>
        <begin position="45"/>
        <end position="47"/>
    </location>
</feature>
<feature type="strand" evidence="37">
    <location>
        <begin position="53"/>
        <end position="57"/>
    </location>
</feature>
<feature type="strand" evidence="38">
    <location>
        <begin position="59"/>
        <end position="61"/>
    </location>
</feature>
<feature type="helix" evidence="37">
    <location>
        <begin position="65"/>
        <end position="77"/>
    </location>
</feature>
<feature type="helix" evidence="37">
    <location>
        <begin position="81"/>
        <end position="83"/>
    </location>
</feature>
<feature type="strand" evidence="37">
    <location>
        <begin position="84"/>
        <end position="87"/>
    </location>
</feature>
<feature type="helix" evidence="37">
    <location>
        <begin position="92"/>
        <end position="95"/>
    </location>
</feature>
<feature type="strand" evidence="37">
    <location>
        <begin position="97"/>
        <end position="101"/>
    </location>
</feature>
<feature type="strand" evidence="37">
    <location>
        <begin position="104"/>
        <end position="107"/>
    </location>
</feature>
<feature type="helix" evidence="37">
    <location>
        <begin position="128"/>
        <end position="131"/>
    </location>
</feature>
<feature type="turn" evidence="37">
    <location>
        <begin position="132"/>
        <end position="135"/>
    </location>
</feature>
<feature type="helix" evidence="37">
    <location>
        <begin position="146"/>
        <end position="154"/>
    </location>
</feature>
<feature type="helix" evidence="37">
    <location>
        <begin position="156"/>
        <end position="161"/>
    </location>
</feature>
<feature type="helix" evidence="37">
    <location>
        <begin position="163"/>
        <end position="171"/>
    </location>
</feature>
<feature type="turn" evidence="37">
    <location>
        <begin position="175"/>
        <end position="177"/>
    </location>
</feature>
<feature type="helix" evidence="37">
    <location>
        <begin position="180"/>
        <end position="183"/>
    </location>
</feature>
<feature type="helix" evidence="37">
    <location>
        <begin position="185"/>
        <end position="194"/>
    </location>
</feature>
<feature type="helix" evidence="37">
    <location>
        <begin position="197"/>
        <end position="203"/>
    </location>
</feature>
<feature type="helix" evidence="37">
    <location>
        <begin position="214"/>
        <end position="221"/>
    </location>
</feature>
<feature type="strand" evidence="37">
    <location>
        <begin position="225"/>
        <end position="229"/>
    </location>
</feature>
<feature type="helix" evidence="37">
    <location>
        <begin position="235"/>
        <end position="246"/>
    </location>
</feature>
<feature type="strand" evidence="37">
    <location>
        <begin position="250"/>
        <end position="252"/>
    </location>
</feature>
<feature type="strand" evidence="37">
    <location>
        <begin position="259"/>
        <end position="262"/>
    </location>
</feature>
<feature type="helix" evidence="37">
    <location>
        <begin position="264"/>
        <end position="266"/>
    </location>
</feature>
<feature type="strand" evidence="37">
    <location>
        <begin position="268"/>
        <end position="271"/>
    </location>
</feature>
<feature type="strand" evidence="37">
    <location>
        <begin position="276"/>
        <end position="284"/>
    </location>
</feature>
<feature type="helix" evidence="37">
    <location>
        <begin position="288"/>
        <end position="294"/>
    </location>
</feature>
<feature type="helix" evidence="37">
    <location>
        <begin position="297"/>
        <end position="299"/>
    </location>
</feature>
<feature type="helix" evidence="37">
    <location>
        <begin position="300"/>
        <end position="307"/>
    </location>
</feature>
<feature type="strand" evidence="37">
    <location>
        <begin position="311"/>
        <end position="321"/>
    </location>
</feature>
<feature type="strand" evidence="37">
    <location>
        <begin position="330"/>
        <end position="334"/>
    </location>
</feature>
<feature type="turn" evidence="37">
    <location>
        <begin position="337"/>
        <end position="339"/>
    </location>
</feature>
<feature type="strand" evidence="37">
    <location>
        <begin position="341"/>
        <end position="347"/>
    </location>
</feature>
<feature type="helix" evidence="37">
    <location>
        <begin position="349"/>
        <end position="352"/>
    </location>
</feature>
<feature type="helix" evidence="37">
    <location>
        <begin position="354"/>
        <end position="356"/>
    </location>
</feature>
<feature type="turn" evidence="37">
    <location>
        <begin position="358"/>
        <end position="361"/>
    </location>
</feature>
<feature type="strand" evidence="37">
    <location>
        <begin position="363"/>
        <end position="369"/>
    </location>
</feature>
<feature type="helix" evidence="37">
    <location>
        <begin position="371"/>
        <end position="379"/>
    </location>
</feature>
<feature type="helix" evidence="37">
    <location>
        <begin position="386"/>
        <end position="401"/>
    </location>
</feature>
<feature type="strand" evidence="37">
    <location>
        <begin position="408"/>
        <end position="420"/>
    </location>
</feature>
<feature type="helix" evidence="37">
    <location>
        <begin position="426"/>
        <end position="439"/>
    </location>
</feature>
<feature type="strand" evidence="37">
    <location>
        <begin position="443"/>
        <end position="446"/>
    </location>
</feature>
<feature type="turn" evidence="37">
    <location>
        <begin position="449"/>
        <end position="451"/>
    </location>
</feature>
<feature type="helix" evidence="37">
    <location>
        <begin position="456"/>
        <end position="472"/>
    </location>
</feature>
<organism>
    <name type="scientific">Homo sapiens</name>
    <name type="common">Human</name>
    <dbReference type="NCBI Taxonomy" id="9606"/>
    <lineage>
        <taxon>Eukaryota</taxon>
        <taxon>Metazoa</taxon>
        <taxon>Chordata</taxon>
        <taxon>Craniata</taxon>
        <taxon>Vertebrata</taxon>
        <taxon>Euteleostomi</taxon>
        <taxon>Mammalia</taxon>
        <taxon>Eutheria</taxon>
        <taxon>Euarchontoglires</taxon>
        <taxon>Primates</taxon>
        <taxon>Haplorrhini</taxon>
        <taxon>Catarrhini</taxon>
        <taxon>Hominidae</taxon>
        <taxon>Homo</taxon>
    </lineage>
</organism>
<comment type="function">
    <text evidence="22 24 27">Catalyzes the 6-electron oxidation of protoporphyrinogen-IX to form protoporphyrin-IX.</text>
</comment>
<comment type="catalytic activity">
    <reaction evidence="22 24">
        <text>protoporphyrinogen IX + 3 O2 = protoporphyrin IX + 3 H2O2</text>
        <dbReference type="Rhea" id="RHEA:25576"/>
        <dbReference type="ChEBI" id="CHEBI:15379"/>
        <dbReference type="ChEBI" id="CHEBI:16240"/>
        <dbReference type="ChEBI" id="CHEBI:57306"/>
        <dbReference type="ChEBI" id="CHEBI:57307"/>
        <dbReference type="EC" id="1.3.3.4"/>
    </reaction>
</comment>
<comment type="cofactor">
    <cofactor evidence="22">
        <name>FAD</name>
        <dbReference type="ChEBI" id="CHEBI:57692"/>
    </cofactor>
    <text evidence="22">Binds 1 FAD per subunit.</text>
</comment>
<comment type="pathway">
    <text evidence="22 24">Porphyrin-containing compound metabolism; protoporphyrin-IX biosynthesis; protoporphyrin-IX from protoporphyrinogen-IX: step 1/1.</text>
</comment>
<comment type="subunit">
    <text evidence="22">Monomer. Homodimer.</text>
</comment>
<comment type="subcellular location">
    <subcellularLocation>
        <location evidence="1">Mitochondrion inner membrane</location>
        <topology evidence="1">Peripheral membrane protein</topology>
        <orientation evidence="1">Intermembrane side</orientation>
    </subcellularLocation>
</comment>
<comment type="tissue specificity">
    <text evidence="29">Expressed in heart, brain, placenta, lung, liver, skeletal muscle, kidney and pancreas.</text>
</comment>
<comment type="disease" evidence="2 4 5 7 8 9 10 11 12 13 14 15 16 17 18 19 20 21 22 23 24 25 31 32 34">
    <disease id="DI-00928">
        <name>Variegate porphyria</name>
        <acronym>VP</acronym>
        <description>A form of porphyria. Porphyrias are inherited defects in the biosynthesis of heme, resulting in the accumulation and increased excretion of porphyrins or porphyrin precursors. They are classified as erythropoietic or hepatic, depending on whether the enzyme deficiency occurs in red blood cells or in the liver. Variegate porphyria is an acute hepatic form characterized by partial reduction of protoporphyrinogen oxidase activity, increased photosensitivity, skin blistering and scarring of sun-exposed areas, skin hyperpigmentation, abdominal pain, and neuropsychiatric symptoms. High fecal levels of protoporphyrin and coproporphyrin, increased urine uroporphyrins and iron overload are typical markers of the disease. Inheritance is autosomal dominant with incomplete penetrance.</description>
        <dbReference type="MIM" id="176200"/>
    </disease>
    <text evidence="2 35">The disease is caused by variants affecting the gene represented in this entry. Mutations leading to severe PPOX deficiency cause the rare homozygous variant form of VP. Missense mutations that preserve 10%-25% of wild-type activity may not cause clinically overt VP in heterozygotes (PubMed:9811936). Mutations with intermediate effect on catalytic activity may cause VP, but with a low clinical penetrance (PubMed:10486317).</text>
</comment>
<comment type="disease" evidence="3 6 26 28 33 35">
    <disease id="DI-06749">
        <name>Variegate porphyria, childhood-onset</name>
        <acronym>VPCO</acronym>
        <description>An autosomal recessive form of variegate porphyria, a disorder of heme biosynthesis that results from diminished activity of protoporphyrinogen oxidase. VPCO is characterized by severe protoporphyrinogen oxidase deficiency, onset of photosensitization by porphyrins in early childhood, skin scarring and hyperpigmentation, and skeletal abnormalities of the hand. Additional variable features are short stature, impaired intellectual development, and seizures. VPCO patients rarely experience acute neuropsychiatric or abdominal attacks.</description>
        <dbReference type="MIM" id="620483"/>
    </disease>
    <text>The disease is caused by variants affecting the gene represented in this entry.</text>
</comment>
<comment type="similarity">
    <text evidence="36">Belongs to the protoporphyrinogen/coproporphyrinogen oxidase family. Protoporphyrinogen oxidase subfamily.</text>
</comment>
<comment type="online information" name="Wikipedia">
    <link uri="https://en.wikipedia.org/wiki/Protoporphyrinogen_oxidase"/>
    <text>Protoporphyrinogen oxidase entry</text>
</comment>